<sequence>MLCPPDVAFEKRHFKRRDGNKVVPPSIALVAGLESGFLFKLSAVEDVARRGQFPGLLTEDGFLLMCEESEHIRDAYAMAKHLVALAPDGIFTRATLQEAAGKVGSTQDTLSVEEVDALFNALDSDNRGYVSVDEFMDALYGEEGREAMREIRREYMRRKIEVEGEPSWRMRPTPKPTRKLRQKRKREQGQKRKQGQRQKQEQGQRQKREQGQRQKQEQGQKRKRERGGAQRPPPPKQKAGCGC</sequence>
<protein>
    <recommendedName>
        <fullName>I/6 autoantigen</fullName>
    </recommendedName>
</protein>
<evidence type="ECO:0000255" key="1">
    <source>
        <dbReference type="PROSITE-ProRule" id="PRU00448"/>
    </source>
</evidence>
<evidence type="ECO:0000256" key="2">
    <source>
        <dbReference type="SAM" id="MobiDB-lite"/>
    </source>
</evidence>
<proteinExistence type="evidence at transcript level"/>
<reference key="1">
    <citation type="journal article" date="1997" name="Eur. J. Cell Biol.">
        <title>The Trypanosoma brucei autoantigen I/6 is an internally repetitive cytoskeletal protein.</title>
        <authorList>
            <person name="Detmer E."/>
            <person name="Hemphill A."/>
            <person name="Mueller N."/>
            <person name="Seebeck T."/>
        </authorList>
    </citation>
    <scope>NUCLEOTIDE SEQUENCE [MRNA]</scope>
    <source>
        <strain>427</strain>
    </source>
</reference>
<organism>
    <name type="scientific">Trypanosoma brucei brucei</name>
    <dbReference type="NCBI Taxonomy" id="5702"/>
    <lineage>
        <taxon>Eukaryota</taxon>
        <taxon>Discoba</taxon>
        <taxon>Euglenozoa</taxon>
        <taxon>Kinetoplastea</taxon>
        <taxon>Metakinetoplastina</taxon>
        <taxon>Trypanosomatida</taxon>
        <taxon>Trypanosomatidae</taxon>
        <taxon>Trypanosoma</taxon>
    </lineage>
</organism>
<dbReference type="EMBL" id="X96554">
    <property type="protein sequence ID" value="CAA65390.1"/>
    <property type="molecule type" value="mRNA"/>
</dbReference>
<dbReference type="SMR" id="Q26768"/>
<dbReference type="GO" id="GO:0030863">
    <property type="term" value="C:cortical cytoskeleton"/>
    <property type="evidence" value="ECO:0000314"/>
    <property type="project" value="GeneDB"/>
</dbReference>
<dbReference type="GO" id="GO:0005737">
    <property type="term" value="C:cytoplasm"/>
    <property type="evidence" value="ECO:0000314"/>
    <property type="project" value="GeneDB"/>
</dbReference>
<dbReference type="GO" id="GO:0005874">
    <property type="term" value="C:microtubule"/>
    <property type="evidence" value="ECO:0007669"/>
    <property type="project" value="UniProtKB-KW"/>
</dbReference>
<dbReference type="GO" id="GO:0015630">
    <property type="term" value="C:microtubule cytoskeleton"/>
    <property type="evidence" value="ECO:0000314"/>
    <property type="project" value="GeneDB"/>
</dbReference>
<dbReference type="GO" id="GO:0005509">
    <property type="term" value="F:calcium ion binding"/>
    <property type="evidence" value="ECO:0007669"/>
    <property type="project" value="InterPro"/>
</dbReference>
<dbReference type="Gene3D" id="1.10.238.10">
    <property type="entry name" value="EF-hand"/>
    <property type="match status" value="1"/>
</dbReference>
<dbReference type="InterPro" id="IPR011992">
    <property type="entry name" value="EF-hand-dom_pair"/>
</dbReference>
<dbReference type="InterPro" id="IPR002048">
    <property type="entry name" value="EF_hand_dom"/>
</dbReference>
<dbReference type="Pfam" id="PF13833">
    <property type="entry name" value="EF-hand_8"/>
    <property type="match status" value="1"/>
</dbReference>
<dbReference type="SUPFAM" id="SSF47473">
    <property type="entry name" value="EF-hand"/>
    <property type="match status" value="1"/>
</dbReference>
<dbReference type="PROSITE" id="PS50222">
    <property type="entry name" value="EF_HAND_2"/>
    <property type="match status" value="1"/>
</dbReference>
<accession>Q26768</accession>
<feature type="chain" id="PRO_0000064497" description="I/6 autoantigen">
    <location>
        <begin position="1"/>
        <end position="243"/>
    </location>
</feature>
<feature type="domain" description="EF-hand" evidence="1">
    <location>
        <begin position="110"/>
        <end position="145"/>
    </location>
</feature>
<feature type="repeat" description="1">
    <location>
        <begin position="181"/>
        <end position="188"/>
    </location>
</feature>
<feature type="repeat" description="2">
    <location>
        <begin position="189"/>
        <end position="196"/>
    </location>
</feature>
<feature type="repeat" description="3">
    <location>
        <begin position="197"/>
        <end position="204"/>
    </location>
</feature>
<feature type="repeat" description="4">
    <location>
        <begin position="205"/>
        <end position="212"/>
    </location>
</feature>
<feature type="repeat" description="5">
    <location>
        <begin position="213"/>
        <end position="220"/>
    </location>
</feature>
<feature type="repeat" description="6">
    <location>
        <begin position="221"/>
        <end position="228"/>
    </location>
</feature>
<feature type="region of interest" description="Disordered" evidence="2">
    <location>
        <begin position="166"/>
        <end position="243"/>
    </location>
</feature>
<feature type="region of interest" description="6 X 8 AA tandem repeats">
    <location>
        <begin position="181"/>
        <end position="228"/>
    </location>
</feature>
<feature type="compositionally biased region" description="Basic residues" evidence="2">
    <location>
        <begin position="176"/>
        <end position="196"/>
    </location>
</feature>
<feature type="compositionally biased region" description="Basic and acidic residues" evidence="2">
    <location>
        <begin position="198"/>
        <end position="220"/>
    </location>
</feature>
<comment type="function">
    <text>Microtubule-associated protein that may be involved in cross-linking microtubules.</text>
</comment>
<comment type="subcellular location">
    <subcellularLocation>
        <location>Cytoplasm</location>
        <location>Cytoskeleton</location>
    </subcellularLocation>
</comment>
<name>AGI6_TRYBB</name>
<keyword id="KW-0963">Cytoplasm</keyword>
<keyword id="KW-0206">Cytoskeleton</keyword>
<keyword id="KW-0493">Microtubule</keyword>
<keyword id="KW-0677">Repeat</keyword>